<accession>A6GZ94</accession>
<feature type="chain" id="PRO_0000354472" description="Large ribosomal subunit protein uL22">
    <location>
        <begin position="1"/>
        <end position="137"/>
    </location>
</feature>
<protein>
    <recommendedName>
        <fullName evidence="1">Large ribosomal subunit protein uL22</fullName>
    </recommendedName>
    <alternativeName>
        <fullName evidence="2">50S ribosomal protein L22</fullName>
    </alternativeName>
</protein>
<sequence>MGVRKRETADARKEANKSIAFAKLNNCPTSPRKMRLVADLVRGQKVDRALNILRFSSKEASRKLEKLVLSVIANWQAKNPEANMEEAGLFIKTITVDGGMMLKRLRPAPQGRAHRIRKRSNHVTIVLGSINNTQAIN</sequence>
<comment type="function">
    <text evidence="1">This protein binds specifically to 23S rRNA; its binding is stimulated by other ribosomal proteins, e.g. L4, L17, and L20. It is important during the early stages of 50S assembly. It makes multiple contacts with different domains of the 23S rRNA in the assembled 50S subunit and ribosome (By similarity).</text>
</comment>
<comment type="function">
    <text evidence="1">The globular domain of the protein is located near the polypeptide exit tunnel on the outside of the subunit, while an extended beta-hairpin is found that lines the wall of the exit tunnel in the center of the 70S ribosome.</text>
</comment>
<comment type="subunit">
    <text evidence="1">Part of the 50S ribosomal subunit.</text>
</comment>
<comment type="similarity">
    <text evidence="1">Belongs to the universal ribosomal protein uL22 family.</text>
</comment>
<name>RL22_FLAPJ</name>
<gene>
    <name evidence="1" type="primary">rplV</name>
    <name type="ordered locus">FP1334</name>
</gene>
<keyword id="KW-1185">Reference proteome</keyword>
<keyword id="KW-0687">Ribonucleoprotein</keyword>
<keyword id="KW-0689">Ribosomal protein</keyword>
<keyword id="KW-0694">RNA-binding</keyword>
<keyword id="KW-0699">rRNA-binding</keyword>
<proteinExistence type="inferred from homology"/>
<evidence type="ECO:0000255" key="1">
    <source>
        <dbReference type="HAMAP-Rule" id="MF_01331"/>
    </source>
</evidence>
<evidence type="ECO:0000305" key="2"/>
<dbReference type="EMBL" id="AM398681">
    <property type="protein sequence ID" value="CAL43417.1"/>
    <property type="molecule type" value="Genomic_DNA"/>
</dbReference>
<dbReference type="RefSeq" id="WP_011963465.1">
    <property type="nucleotide sequence ID" value="NC_009613.3"/>
</dbReference>
<dbReference type="RefSeq" id="YP_001296228.1">
    <property type="nucleotide sequence ID" value="NC_009613.3"/>
</dbReference>
<dbReference type="SMR" id="A6GZ94"/>
<dbReference type="STRING" id="402612.FP1334"/>
<dbReference type="EnsemblBacteria" id="CAL43417">
    <property type="protein sequence ID" value="CAL43417"/>
    <property type="gene ID" value="FP1334"/>
</dbReference>
<dbReference type="GeneID" id="66553237"/>
<dbReference type="KEGG" id="fps:FP1334"/>
<dbReference type="PATRIC" id="fig|402612.5.peg.1351"/>
<dbReference type="eggNOG" id="COG0091">
    <property type="taxonomic scope" value="Bacteria"/>
</dbReference>
<dbReference type="HOGENOM" id="CLU_083987_3_1_10"/>
<dbReference type="OrthoDB" id="9805969at2"/>
<dbReference type="Proteomes" id="UP000006394">
    <property type="component" value="Chromosome"/>
</dbReference>
<dbReference type="GO" id="GO:0022625">
    <property type="term" value="C:cytosolic large ribosomal subunit"/>
    <property type="evidence" value="ECO:0007669"/>
    <property type="project" value="TreeGrafter"/>
</dbReference>
<dbReference type="GO" id="GO:0019843">
    <property type="term" value="F:rRNA binding"/>
    <property type="evidence" value="ECO:0007669"/>
    <property type="project" value="UniProtKB-UniRule"/>
</dbReference>
<dbReference type="GO" id="GO:0003735">
    <property type="term" value="F:structural constituent of ribosome"/>
    <property type="evidence" value="ECO:0007669"/>
    <property type="project" value="InterPro"/>
</dbReference>
<dbReference type="GO" id="GO:0006412">
    <property type="term" value="P:translation"/>
    <property type="evidence" value="ECO:0007669"/>
    <property type="project" value="UniProtKB-UniRule"/>
</dbReference>
<dbReference type="CDD" id="cd00336">
    <property type="entry name" value="Ribosomal_L22"/>
    <property type="match status" value="1"/>
</dbReference>
<dbReference type="Gene3D" id="3.90.470.10">
    <property type="entry name" value="Ribosomal protein L22/L17"/>
    <property type="match status" value="1"/>
</dbReference>
<dbReference type="HAMAP" id="MF_01331_B">
    <property type="entry name" value="Ribosomal_uL22_B"/>
    <property type="match status" value="1"/>
</dbReference>
<dbReference type="InterPro" id="IPR001063">
    <property type="entry name" value="Ribosomal_uL22"/>
</dbReference>
<dbReference type="InterPro" id="IPR005727">
    <property type="entry name" value="Ribosomal_uL22_bac/chlpt-type"/>
</dbReference>
<dbReference type="InterPro" id="IPR047867">
    <property type="entry name" value="Ribosomal_uL22_bac/org-type"/>
</dbReference>
<dbReference type="InterPro" id="IPR036394">
    <property type="entry name" value="Ribosomal_uL22_sf"/>
</dbReference>
<dbReference type="NCBIfam" id="TIGR01044">
    <property type="entry name" value="rplV_bact"/>
    <property type="match status" value="1"/>
</dbReference>
<dbReference type="PANTHER" id="PTHR13501">
    <property type="entry name" value="CHLOROPLAST 50S RIBOSOMAL PROTEIN L22-RELATED"/>
    <property type="match status" value="1"/>
</dbReference>
<dbReference type="PANTHER" id="PTHR13501:SF8">
    <property type="entry name" value="LARGE RIBOSOMAL SUBUNIT PROTEIN UL22M"/>
    <property type="match status" value="1"/>
</dbReference>
<dbReference type="Pfam" id="PF00237">
    <property type="entry name" value="Ribosomal_L22"/>
    <property type="match status" value="1"/>
</dbReference>
<dbReference type="SUPFAM" id="SSF54843">
    <property type="entry name" value="Ribosomal protein L22"/>
    <property type="match status" value="1"/>
</dbReference>
<organism>
    <name type="scientific">Flavobacterium psychrophilum (strain ATCC 49511 / DSM 21280 / CIP 103535 / JIP02/86)</name>
    <dbReference type="NCBI Taxonomy" id="402612"/>
    <lineage>
        <taxon>Bacteria</taxon>
        <taxon>Pseudomonadati</taxon>
        <taxon>Bacteroidota</taxon>
        <taxon>Flavobacteriia</taxon>
        <taxon>Flavobacteriales</taxon>
        <taxon>Flavobacteriaceae</taxon>
        <taxon>Flavobacterium</taxon>
    </lineage>
</organism>
<reference key="1">
    <citation type="journal article" date="2007" name="Nat. Biotechnol.">
        <title>Complete genome sequence of the fish pathogen Flavobacterium psychrophilum.</title>
        <authorList>
            <person name="Duchaud E."/>
            <person name="Boussaha M."/>
            <person name="Loux V."/>
            <person name="Bernardet J.-F."/>
            <person name="Michel C."/>
            <person name="Kerouault B."/>
            <person name="Mondot S."/>
            <person name="Nicolas P."/>
            <person name="Bossy R."/>
            <person name="Caron C."/>
            <person name="Bessieres P."/>
            <person name="Gibrat J.-F."/>
            <person name="Claverol S."/>
            <person name="Dumetz F."/>
            <person name="Le Henaff M."/>
            <person name="Benmansour A."/>
        </authorList>
    </citation>
    <scope>NUCLEOTIDE SEQUENCE [LARGE SCALE GENOMIC DNA]</scope>
    <source>
        <strain>ATCC 49511 / DSM 21280 / CIP 103535 / JIP02/86</strain>
    </source>
</reference>